<gene>
    <name type="ordered locus">A1C_04175</name>
</gene>
<name>Y4175_RICAH</name>
<comment type="subcellular location">
    <subcellularLocation>
        <location evidence="1">Cytoplasm</location>
    </subcellularLocation>
</comment>
<comment type="similarity">
    <text evidence="1">Belongs to the TACO1 family.</text>
</comment>
<organism>
    <name type="scientific">Rickettsia akari (strain Hartford)</name>
    <dbReference type="NCBI Taxonomy" id="293614"/>
    <lineage>
        <taxon>Bacteria</taxon>
        <taxon>Pseudomonadati</taxon>
        <taxon>Pseudomonadota</taxon>
        <taxon>Alphaproteobacteria</taxon>
        <taxon>Rickettsiales</taxon>
        <taxon>Rickettsiaceae</taxon>
        <taxon>Rickettsieae</taxon>
        <taxon>Rickettsia</taxon>
        <taxon>spotted fever group</taxon>
    </lineage>
</organism>
<feature type="chain" id="PRO_1000045365" description="Probable transcriptional regulatory protein A1C_04175">
    <location>
        <begin position="1"/>
        <end position="252"/>
    </location>
</feature>
<evidence type="ECO:0000255" key="1">
    <source>
        <dbReference type="HAMAP-Rule" id="MF_00693"/>
    </source>
</evidence>
<keyword id="KW-0963">Cytoplasm</keyword>
<keyword id="KW-0238">DNA-binding</keyword>
<keyword id="KW-0804">Transcription</keyword>
<keyword id="KW-0805">Transcription regulation</keyword>
<protein>
    <recommendedName>
        <fullName evidence="1">Probable transcriptional regulatory protein A1C_04175</fullName>
    </recommendedName>
</protein>
<dbReference type="EMBL" id="CP000847">
    <property type="protein sequence ID" value="ABV75108.1"/>
    <property type="molecule type" value="Genomic_DNA"/>
</dbReference>
<dbReference type="RefSeq" id="WP_012149738.1">
    <property type="nucleotide sequence ID" value="NC_009881.1"/>
</dbReference>
<dbReference type="SMR" id="A8GNY3"/>
<dbReference type="STRING" id="293614.A1C_04175"/>
<dbReference type="KEGG" id="rak:A1C_04175"/>
<dbReference type="eggNOG" id="COG0217">
    <property type="taxonomic scope" value="Bacteria"/>
</dbReference>
<dbReference type="HOGENOM" id="CLU_062974_2_2_5"/>
<dbReference type="Proteomes" id="UP000006830">
    <property type="component" value="Chromosome"/>
</dbReference>
<dbReference type="GO" id="GO:0005737">
    <property type="term" value="C:cytoplasm"/>
    <property type="evidence" value="ECO:0007669"/>
    <property type="project" value="UniProtKB-SubCell"/>
</dbReference>
<dbReference type="GO" id="GO:0003677">
    <property type="term" value="F:DNA binding"/>
    <property type="evidence" value="ECO:0007669"/>
    <property type="project" value="UniProtKB-UniRule"/>
</dbReference>
<dbReference type="GO" id="GO:0006355">
    <property type="term" value="P:regulation of DNA-templated transcription"/>
    <property type="evidence" value="ECO:0007669"/>
    <property type="project" value="UniProtKB-UniRule"/>
</dbReference>
<dbReference type="FunFam" id="1.10.10.200:FF:000002">
    <property type="entry name" value="Probable transcriptional regulatory protein CLM62_37755"/>
    <property type="match status" value="1"/>
</dbReference>
<dbReference type="Gene3D" id="1.10.10.200">
    <property type="match status" value="1"/>
</dbReference>
<dbReference type="Gene3D" id="3.30.70.980">
    <property type="match status" value="2"/>
</dbReference>
<dbReference type="HAMAP" id="MF_00693">
    <property type="entry name" value="Transcrip_reg_TACO1"/>
    <property type="match status" value="1"/>
</dbReference>
<dbReference type="InterPro" id="IPR017856">
    <property type="entry name" value="Integrase-like_N"/>
</dbReference>
<dbReference type="InterPro" id="IPR048300">
    <property type="entry name" value="TACO1_YebC-like_2nd/3rd_dom"/>
</dbReference>
<dbReference type="InterPro" id="IPR049083">
    <property type="entry name" value="TACO1_YebC_N"/>
</dbReference>
<dbReference type="InterPro" id="IPR002876">
    <property type="entry name" value="Transcrip_reg_TACO1-like"/>
</dbReference>
<dbReference type="InterPro" id="IPR026564">
    <property type="entry name" value="Transcrip_reg_TACO1-like_dom3"/>
</dbReference>
<dbReference type="InterPro" id="IPR029072">
    <property type="entry name" value="YebC-like"/>
</dbReference>
<dbReference type="NCBIfam" id="NF001030">
    <property type="entry name" value="PRK00110.1"/>
    <property type="match status" value="1"/>
</dbReference>
<dbReference type="NCBIfam" id="NF009044">
    <property type="entry name" value="PRK12378.1"/>
    <property type="match status" value="1"/>
</dbReference>
<dbReference type="NCBIfam" id="TIGR01033">
    <property type="entry name" value="YebC/PmpR family DNA-binding transcriptional regulator"/>
    <property type="match status" value="1"/>
</dbReference>
<dbReference type="PANTHER" id="PTHR12532:SF11">
    <property type="match status" value="1"/>
</dbReference>
<dbReference type="PANTHER" id="PTHR12532">
    <property type="entry name" value="TRANSLATIONAL ACTIVATOR OF CYTOCHROME C OXIDASE 1"/>
    <property type="match status" value="1"/>
</dbReference>
<dbReference type="Pfam" id="PF20772">
    <property type="entry name" value="TACO1_YebC_N"/>
    <property type="match status" value="1"/>
</dbReference>
<dbReference type="Pfam" id="PF01709">
    <property type="entry name" value="Transcrip_reg"/>
    <property type="match status" value="1"/>
</dbReference>
<dbReference type="SUPFAM" id="SSF75625">
    <property type="entry name" value="YebC-like"/>
    <property type="match status" value="1"/>
</dbReference>
<proteinExistence type="inferred from homology"/>
<sequence>MAGHSKFKNIQHRKCAQDKKRAKVFTKLIREIVTAVKTGSSNIPENNPRLRNALTAARSQNLPKERIDKAINSADDANTENYTEIRYEGYAPNGIAIIVEALTDNKNRTAAEVRSSFTKYGGSLGETGSVNYLFKHCGVIQYPTNIASNEDIFEAAIEAGGDDIVSDAIFHTICTDIENFSKVLEFLTGKYGIPEDSYIGWIPLNTIIIDDTEKAEKLLKLVEALEESDDVQRVFSNYEFSDDVYEIIQGEE</sequence>
<reference key="1">
    <citation type="submission" date="2007-09" db="EMBL/GenBank/DDBJ databases">
        <title>Complete genome sequence of Rickettsia akari.</title>
        <authorList>
            <person name="Madan A."/>
            <person name="Fahey J."/>
            <person name="Helton E."/>
            <person name="Ketteman M."/>
            <person name="Madan A."/>
            <person name="Rodrigues S."/>
            <person name="Sanchez A."/>
            <person name="Whiting M."/>
            <person name="Dasch G."/>
            <person name="Eremeeva M."/>
        </authorList>
    </citation>
    <scope>NUCLEOTIDE SEQUENCE [LARGE SCALE GENOMIC DNA]</scope>
    <source>
        <strain>Hartford</strain>
    </source>
</reference>
<accession>A8GNY3</accession>